<accession>C3PP58</accession>
<feature type="chain" id="PRO_1000205375" description="Small ribosomal subunit protein bS21">
    <location>
        <begin position="1"/>
        <end position="66"/>
    </location>
</feature>
<organism>
    <name type="scientific">Rickettsia africae (strain ESF-5)</name>
    <dbReference type="NCBI Taxonomy" id="347255"/>
    <lineage>
        <taxon>Bacteria</taxon>
        <taxon>Pseudomonadati</taxon>
        <taxon>Pseudomonadota</taxon>
        <taxon>Alphaproteobacteria</taxon>
        <taxon>Rickettsiales</taxon>
        <taxon>Rickettsiaceae</taxon>
        <taxon>Rickettsieae</taxon>
        <taxon>Rickettsia</taxon>
        <taxon>spotted fever group</taxon>
    </lineage>
</organism>
<name>RS21_RICAE</name>
<evidence type="ECO:0000255" key="1">
    <source>
        <dbReference type="HAMAP-Rule" id="MF_00358"/>
    </source>
</evidence>
<evidence type="ECO:0000305" key="2"/>
<dbReference type="EMBL" id="CP001612">
    <property type="protein sequence ID" value="ACP53718.1"/>
    <property type="molecule type" value="Genomic_DNA"/>
</dbReference>
<dbReference type="RefSeq" id="WP_004997902.1">
    <property type="nucleotide sequence ID" value="NC_012633.1"/>
</dbReference>
<dbReference type="SMR" id="C3PP58"/>
<dbReference type="GeneID" id="95361436"/>
<dbReference type="KEGG" id="raf:RAF_ORF0857"/>
<dbReference type="HOGENOM" id="CLU_159258_0_2_5"/>
<dbReference type="Proteomes" id="UP000002305">
    <property type="component" value="Chromosome"/>
</dbReference>
<dbReference type="GO" id="GO:1990904">
    <property type="term" value="C:ribonucleoprotein complex"/>
    <property type="evidence" value="ECO:0007669"/>
    <property type="project" value="UniProtKB-KW"/>
</dbReference>
<dbReference type="GO" id="GO:0005840">
    <property type="term" value="C:ribosome"/>
    <property type="evidence" value="ECO:0007669"/>
    <property type="project" value="UniProtKB-KW"/>
</dbReference>
<dbReference type="GO" id="GO:0003735">
    <property type="term" value="F:structural constituent of ribosome"/>
    <property type="evidence" value="ECO:0007669"/>
    <property type="project" value="InterPro"/>
</dbReference>
<dbReference type="GO" id="GO:0006412">
    <property type="term" value="P:translation"/>
    <property type="evidence" value="ECO:0007669"/>
    <property type="project" value="UniProtKB-UniRule"/>
</dbReference>
<dbReference type="Gene3D" id="1.20.5.1150">
    <property type="entry name" value="Ribosomal protein S8"/>
    <property type="match status" value="1"/>
</dbReference>
<dbReference type="HAMAP" id="MF_00358">
    <property type="entry name" value="Ribosomal_bS21"/>
    <property type="match status" value="1"/>
</dbReference>
<dbReference type="InterPro" id="IPR001911">
    <property type="entry name" value="Ribosomal_bS21"/>
</dbReference>
<dbReference type="InterPro" id="IPR038380">
    <property type="entry name" value="Ribosomal_bS21_sf"/>
</dbReference>
<dbReference type="NCBIfam" id="TIGR00030">
    <property type="entry name" value="S21p"/>
    <property type="match status" value="1"/>
</dbReference>
<dbReference type="Pfam" id="PF01165">
    <property type="entry name" value="Ribosomal_S21"/>
    <property type="match status" value="1"/>
</dbReference>
<reference key="1">
    <citation type="journal article" date="2009" name="BMC Genomics">
        <title>Analysis of the Rickettsia africae genome reveals that virulence acquisition in Rickettsia species may be explained by genome reduction.</title>
        <authorList>
            <person name="Fournier P.-E."/>
            <person name="El Karkouri K."/>
            <person name="Leroy Q."/>
            <person name="Robert C."/>
            <person name="Giumelli B."/>
            <person name="Renesto P."/>
            <person name="Socolovschi C."/>
            <person name="Parola P."/>
            <person name="Audic S."/>
            <person name="Raoult D."/>
        </authorList>
    </citation>
    <scope>NUCLEOTIDE SEQUENCE [LARGE SCALE GENOMIC DNA]</scope>
    <source>
        <strain>ESF-5</strain>
    </source>
</reference>
<protein>
    <recommendedName>
        <fullName evidence="1">Small ribosomal subunit protein bS21</fullName>
    </recommendedName>
    <alternativeName>
        <fullName evidence="2">30S ribosomal protein S21</fullName>
    </alternativeName>
</protein>
<keyword id="KW-0687">Ribonucleoprotein</keyword>
<keyword id="KW-0689">Ribosomal protein</keyword>
<comment type="similarity">
    <text evidence="1">Belongs to the bacterial ribosomal protein bS21 family.</text>
</comment>
<sequence>MILVNVHAGNCDNTLKNFKKKLQRELYFRKMKEQRYYETPSAKRVRKVQEAARRQRKFARKKMFDE</sequence>
<gene>
    <name evidence="1" type="primary">rpsU</name>
    <name type="ordered locus">RAF_ORF0857</name>
</gene>
<proteinExistence type="inferred from homology"/>